<proteinExistence type="inferred from homology"/>
<gene>
    <name evidence="1" type="primary">recU</name>
    <name type="ordered locus">BALH_1402</name>
</gene>
<evidence type="ECO:0000255" key="1">
    <source>
        <dbReference type="HAMAP-Rule" id="MF_00130"/>
    </source>
</evidence>
<evidence type="ECO:0000256" key="2">
    <source>
        <dbReference type="SAM" id="MobiDB-lite"/>
    </source>
</evidence>
<accession>A0RC02</accession>
<protein>
    <recommendedName>
        <fullName evidence="1">Holliday junction resolvase RecU</fullName>
        <ecNumber evidence="1">3.1.21.10</ecNumber>
    </recommendedName>
    <alternativeName>
        <fullName evidence="1">Recombination protein U homolog</fullName>
    </alternativeName>
</protein>
<dbReference type="EC" id="3.1.21.10" evidence="1"/>
<dbReference type="EMBL" id="CP000485">
    <property type="protein sequence ID" value="ABK84745.1"/>
    <property type="molecule type" value="Genomic_DNA"/>
</dbReference>
<dbReference type="RefSeq" id="WP_000155593.1">
    <property type="nucleotide sequence ID" value="NC_008600.1"/>
</dbReference>
<dbReference type="SMR" id="A0RC02"/>
<dbReference type="GeneID" id="93009490"/>
<dbReference type="KEGG" id="btl:BALH_1402"/>
<dbReference type="HOGENOM" id="CLU_096340_0_0_9"/>
<dbReference type="GO" id="GO:0005737">
    <property type="term" value="C:cytoplasm"/>
    <property type="evidence" value="ECO:0007669"/>
    <property type="project" value="UniProtKB-SubCell"/>
</dbReference>
<dbReference type="GO" id="GO:0004519">
    <property type="term" value="F:endonuclease activity"/>
    <property type="evidence" value="ECO:0007669"/>
    <property type="project" value="UniProtKB-UniRule"/>
</dbReference>
<dbReference type="GO" id="GO:0000287">
    <property type="term" value="F:magnesium ion binding"/>
    <property type="evidence" value="ECO:0007669"/>
    <property type="project" value="UniProtKB-UniRule"/>
</dbReference>
<dbReference type="GO" id="GO:0003676">
    <property type="term" value="F:nucleic acid binding"/>
    <property type="evidence" value="ECO:0007669"/>
    <property type="project" value="InterPro"/>
</dbReference>
<dbReference type="GO" id="GO:0007059">
    <property type="term" value="P:chromosome segregation"/>
    <property type="evidence" value="ECO:0007669"/>
    <property type="project" value="UniProtKB-UniRule"/>
</dbReference>
<dbReference type="GO" id="GO:0006310">
    <property type="term" value="P:DNA recombination"/>
    <property type="evidence" value="ECO:0007669"/>
    <property type="project" value="UniProtKB-UniRule"/>
</dbReference>
<dbReference type="GO" id="GO:0006281">
    <property type="term" value="P:DNA repair"/>
    <property type="evidence" value="ECO:0007669"/>
    <property type="project" value="UniProtKB-UniRule"/>
</dbReference>
<dbReference type="CDD" id="cd22354">
    <property type="entry name" value="RecU-like"/>
    <property type="match status" value="1"/>
</dbReference>
<dbReference type="Gene3D" id="3.40.1350.10">
    <property type="match status" value="1"/>
</dbReference>
<dbReference type="HAMAP" id="MF_00130">
    <property type="entry name" value="RecU"/>
    <property type="match status" value="1"/>
</dbReference>
<dbReference type="InterPro" id="IPR004612">
    <property type="entry name" value="Resolv_RecU"/>
</dbReference>
<dbReference type="InterPro" id="IPR011335">
    <property type="entry name" value="Restrct_endonuc-II-like"/>
</dbReference>
<dbReference type="InterPro" id="IPR011856">
    <property type="entry name" value="tRNA_endonuc-like_dom_sf"/>
</dbReference>
<dbReference type="NCBIfam" id="NF002581">
    <property type="entry name" value="PRK02234.1-2"/>
    <property type="match status" value="1"/>
</dbReference>
<dbReference type="NCBIfam" id="NF002584">
    <property type="entry name" value="PRK02234.1-5"/>
    <property type="match status" value="1"/>
</dbReference>
<dbReference type="NCBIfam" id="NF002585">
    <property type="entry name" value="PRK02234.1-6"/>
    <property type="match status" value="1"/>
</dbReference>
<dbReference type="NCBIfam" id="TIGR00648">
    <property type="entry name" value="recU"/>
    <property type="match status" value="1"/>
</dbReference>
<dbReference type="Pfam" id="PF03838">
    <property type="entry name" value="RecU"/>
    <property type="match status" value="1"/>
</dbReference>
<dbReference type="PIRSF" id="PIRSF037785">
    <property type="entry name" value="RecU"/>
    <property type="match status" value="1"/>
</dbReference>
<dbReference type="SUPFAM" id="SSF52980">
    <property type="entry name" value="Restriction endonuclease-like"/>
    <property type="match status" value="1"/>
</dbReference>
<organism>
    <name type="scientific">Bacillus thuringiensis (strain Al Hakam)</name>
    <dbReference type="NCBI Taxonomy" id="412694"/>
    <lineage>
        <taxon>Bacteria</taxon>
        <taxon>Bacillati</taxon>
        <taxon>Bacillota</taxon>
        <taxon>Bacilli</taxon>
        <taxon>Bacillales</taxon>
        <taxon>Bacillaceae</taxon>
        <taxon>Bacillus</taxon>
        <taxon>Bacillus cereus group</taxon>
    </lineage>
</organism>
<sequence length="200" mass="23313">MTIRYPNGKRYNQASQPHKTPIKKHTYSNRGMSLEEELNETNEYYLTHNIACVHKKPTPLQIVKVDYPARSAAVVKEAYFKQPSTTDYNGVYKGKYIDFEAKETKNKTSFPLQNFHLHQIEHMKQVIAHNGIAFVIIKFTLFDELYLLDAKHIIAFWNRQNTGGRKSITKEEIVEHGSLLSCGYHPRIDYIRVLDTVYFS</sequence>
<name>RECU_BACAH</name>
<comment type="function">
    <text evidence="1">Endonuclease that resolves Holliday junction intermediates in genetic recombination. Cleaves mobile four-strand junctions by introducing symmetrical nicks in paired strands. Promotes annealing of linear ssDNA with homologous dsDNA. Required for DNA repair, homologous recombination and chromosome segregation.</text>
</comment>
<comment type="catalytic activity">
    <reaction evidence="1">
        <text>Endonucleolytic cleavage at a junction such as a reciprocal single-stranded crossover between two homologous DNA duplexes (Holliday junction).</text>
        <dbReference type="EC" id="3.1.21.10"/>
    </reaction>
</comment>
<comment type="cofactor">
    <cofactor evidence="1">
        <name>Mg(2+)</name>
        <dbReference type="ChEBI" id="CHEBI:18420"/>
    </cofactor>
    <text evidence="1">Binds 1 Mg(2+) ion per subunit.</text>
</comment>
<comment type="subcellular location">
    <subcellularLocation>
        <location evidence="1">Cytoplasm</location>
    </subcellularLocation>
</comment>
<comment type="similarity">
    <text evidence="1">Belongs to the RecU family.</text>
</comment>
<feature type="chain" id="PRO_1000016715" description="Holliday junction resolvase RecU">
    <location>
        <begin position="1"/>
        <end position="200"/>
    </location>
</feature>
<feature type="region of interest" description="Disordered" evidence="2">
    <location>
        <begin position="1"/>
        <end position="25"/>
    </location>
</feature>
<feature type="binding site" evidence="1">
    <location>
        <position position="85"/>
    </location>
    <ligand>
        <name>Mg(2+)</name>
        <dbReference type="ChEBI" id="CHEBI:18420"/>
    </ligand>
</feature>
<feature type="binding site" evidence="1">
    <location>
        <position position="87"/>
    </location>
    <ligand>
        <name>Mg(2+)</name>
        <dbReference type="ChEBI" id="CHEBI:18420"/>
    </ligand>
</feature>
<feature type="binding site" evidence="1">
    <location>
        <position position="100"/>
    </location>
    <ligand>
        <name>Mg(2+)</name>
        <dbReference type="ChEBI" id="CHEBI:18420"/>
    </ligand>
</feature>
<feature type="binding site" evidence="1">
    <location>
        <position position="119"/>
    </location>
    <ligand>
        <name>Mg(2+)</name>
        <dbReference type="ChEBI" id="CHEBI:18420"/>
    </ligand>
</feature>
<feature type="site" description="Transition state stabilizer" evidence="1">
    <location>
        <position position="102"/>
    </location>
</feature>
<keyword id="KW-0963">Cytoplasm</keyword>
<keyword id="KW-0227">DNA damage</keyword>
<keyword id="KW-0233">DNA recombination</keyword>
<keyword id="KW-0234">DNA repair</keyword>
<keyword id="KW-0255">Endonuclease</keyword>
<keyword id="KW-0378">Hydrolase</keyword>
<keyword id="KW-0460">Magnesium</keyword>
<keyword id="KW-0479">Metal-binding</keyword>
<keyword id="KW-0540">Nuclease</keyword>
<reference key="1">
    <citation type="journal article" date="2007" name="J. Bacteriol.">
        <title>The complete genome sequence of Bacillus thuringiensis Al Hakam.</title>
        <authorList>
            <person name="Challacombe J.F."/>
            <person name="Altherr M.R."/>
            <person name="Xie G."/>
            <person name="Bhotika S.S."/>
            <person name="Brown N."/>
            <person name="Bruce D."/>
            <person name="Campbell C.S."/>
            <person name="Campbell M.L."/>
            <person name="Chen J."/>
            <person name="Chertkov O."/>
            <person name="Cleland C."/>
            <person name="Dimitrijevic M."/>
            <person name="Doggett N.A."/>
            <person name="Fawcett J.J."/>
            <person name="Glavina T."/>
            <person name="Goodwin L.A."/>
            <person name="Green L.D."/>
            <person name="Han C.S."/>
            <person name="Hill K.K."/>
            <person name="Hitchcock P."/>
            <person name="Jackson P.J."/>
            <person name="Keim P."/>
            <person name="Kewalramani A.R."/>
            <person name="Longmire J."/>
            <person name="Lucas S."/>
            <person name="Malfatti S."/>
            <person name="Martinez D."/>
            <person name="McMurry K."/>
            <person name="Meincke L.J."/>
            <person name="Misra M."/>
            <person name="Moseman B.L."/>
            <person name="Mundt M."/>
            <person name="Munk A.C."/>
            <person name="Okinaka R.T."/>
            <person name="Parson-Quintana B."/>
            <person name="Reilly L.P."/>
            <person name="Richardson P."/>
            <person name="Robinson D.L."/>
            <person name="Saunders E."/>
            <person name="Tapia R."/>
            <person name="Tesmer J.G."/>
            <person name="Thayer N."/>
            <person name="Thompson L.S."/>
            <person name="Tice H."/>
            <person name="Ticknor L.O."/>
            <person name="Wills P.L."/>
            <person name="Gilna P."/>
            <person name="Brettin T.S."/>
        </authorList>
    </citation>
    <scope>NUCLEOTIDE SEQUENCE [LARGE SCALE GENOMIC DNA]</scope>
    <source>
        <strain>Al Hakam</strain>
    </source>
</reference>